<reference key="1">
    <citation type="submission" date="2004-11" db="EMBL/GenBank/DDBJ databases">
        <authorList>
            <consortium name="The German cDNA consortium"/>
        </authorList>
    </citation>
    <scope>NUCLEOTIDE SEQUENCE [LARGE SCALE MRNA]</scope>
    <source>
        <tissue>Heart</tissue>
    </source>
</reference>
<protein>
    <recommendedName>
        <fullName>Borealin</fullName>
    </recommendedName>
    <alternativeName>
        <fullName>Cell division cycle-associated protein 8</fullName>
    </alternativeName>
</protein>
<organism>
    <name type="scientific">Pongo abelii</name>
    <name type="common">Sumatran orangutan</name>
    <name type="synonym">Pongo pygmaeus abelii</name>
    <dbReference type="NCBI Taxonomy" id="9601"/>
    <lineage>
        <taxon>Eukaryota</taxon>
        <taxon>Metazoa</taxon>
        <taxon>Chordata</taxon>
        <taxon>Craniata</taxon>
        <taxon>Vertebrata</taxon>
        <taxon>Euteleostomi</taxon>
        <taxon>Mammalia</taxon>
        <taxon>Eutheria</taxon>
        <taxon>Euarchontoglires</taxon>
        <taxon>Primates</taxon>
        <taxon>Haplorrhini</taxon>
        <taxon>Catarrhini</taxon>
        <taxon>Hominidae</taxon>
        <taxon>Pongo</taxon>
    </lineage>
</organism>
<accession>Q5RBS5</accession>
<feature type="chain" id="PRO_0000247077" description="Borealin">
    <location>
        <begin position="1"/>
        <end position="280"/>
    </location>
</feature>
<feature type="region of interest" description="Required for interaction with SENP3" evidence="1">
    <location>
        <begin position="1"/>
        <end position="140"/>
    </location>
</feature>
<feature type="region of interest" description="Required for centromere localization" evidence="1">
    <location>
        <begin position="1"/>
        <end position="88"/>
    </location>
</feature>
<feature type="region of interest" description="Required for interaction with INCENP" evidence="1">
    <location>
        <begin position="1"/>
        <end position="58"/>
    </location>
</feature>
<feature type="region of interest" description="Required to form a minimal CPC core complex that localizes to the central spindle and midbody and properly executes the role of the CPC during cytokinesis" evidence="1">
    <location>
        <begin position="10"/>
        <end position="109"/>
    </location>
</feature>
<feature type="region of interest" description="Required for interaction with INCENP and BIRC5" evidence="1">
    <location>
        <begin position="20"/>
        <end position="78"/>
    </location>
</feature>
<feature type="region of interest" description="Disordered" evidence="3">
    <location>
        <begin position="130"/>
        <end position="169"/>
    </location>
</feature>
<feature type="compositionally biased region" description="Basic residues" evidence="3">
    <location>
        <begin position="141"/>
        <end position="152"/>
    </location>
</feature>
<feature type="modified residue" description="Phosphothreonine; by TTK" evidence="2">
    <location>
        <position position="88"/>
    </location>
</feature>
<feature type="modified residue" description="Phosphothreonine; by TTK" evidence="2">
    <location>
        <position position="94"/>
    </location>
</feature>
<feature type="modified residue" description="Phosphothreonine" evidence="2">
    <location>
        <position position="106"/>
    </location>
</feature>
<feature type="modified residue" description="Phosphoserine" evidence="2">
    <location>
        <position position="110"/>
    </location>
</feature>
<feature type="modified residue" description="Phosphoserine; by AURKB" evidence="2">
    <location>
        <position position="165"/>
    </location>
</feature>
<feature type="modified residue" description="Phosphothreonine; by TTK" evidence="2">
    <location>
        <position position="169"/>
    </location>
</feature>
<feature type="modified residue" description="Phosphothreonine" evidence="2">
    <location>
        <position position="189"/>
    </location>
</feature>
<feature type="modified residue" description="Phosphothreonine" evidence="2">
    <location>
        <position position="204"/>
    </location>
</feature>
<feature type="modified residue" description="Phosphoserine" evidence="2">
    <location>
        <position position="219"/>
    </location>
</feature>
<feature type="modified residue" description="Phosphoserine" evidence="2">
    <location>
        <position position="224"/>
    </location>
</feature>
<feature type="modified residue" description="Phosphothreonine; by TTK" evidence="2">
    <location>
        <position position="230"/>
    </location>
</feature>
<feature type="modified residue" description="Phosphoserine" evidence="2">
    <location>
        <position position="238"/>
    </location>
</feature>
<feature type="modified residue" description="Phosphoserine" evidence="2">
    <location>
        <position position="244"/>
    </location>
</feature>
<feature type="cross-link" description="Glycyl lysine isopeptide (Lys-Gly) (interchain with G-Cter in SUMO2)" evidence="2">
    <location>
        <position position="135"/>
    </location>
</feature>
<evidence type="ECO:0000250" key="1"/>
<evidence type="ECO:0000250" key="2">
    <source>
        <dbReference type="UniProtKB" id="Q53HL2"/>
    </source>
</evidence>
<evidence type="ECO:0000256" key="3">
    <source>
        <dbReference type="SAM" id="MobiDB-lite"/>
    </source>
</evidence>
<evidence type="ECO:0000305" key="4"/>
<proteinExistence type="evidence at transcript level"/>
<comment type="function">
    <text evidence="2">Component of the chromosomal passenger complex (CPC), a complex that acts as a key regulator of mitosis. The CPC complex has essential functions at the centromere in ensuring correct chromosome alignment and segregation and is required for chromatin-induced microtubule stabilization and spindle assembly. In the complex, it may be required to direct the CPC to centromeric DNA (By similarity).</text>
</comment>
<comment type="subunit">
    <text evidence="2">May form homooligomers and homodimers. Component of the chromosomal passenger complex (CPC) composed of at least BIRC5/survivin, CDCA8/borealin, INCENP, AURKB or AURKC; in the complex forms a triple-helix bundle-based subcomplex with INCENP and BIRC5. Interacts with SENP3, UBE2I and RANBP2. Interacts (phosphorylated) with SGO1 and SGO2; the association is dependent on CDK1 (By similarity).</text>
</comment>
<comment type="subcellular location">
    <subcellularLocation>
        <location evidence="2">Nucleus</location>
        <location evidence="2">Nucleolus</location>
    </subcellularLocation>
    <subcellularLocation>
        <location evidence="2">Cytoplasm</location>
    </subcellularLocation>
    <subcellularLocation>
        <location evidence="2">Chromosome</location>
        <location evidence="2">Centromere</location>
    </subcellularLocation>
    <subcellularLocation>
        <location evidence="2">Cytoplasm</location>
        <location evidence="2">Cytoskeleton</location>
        <location evidence="2">Spindle</location>
    </subcellularLocation>
    <text evidence="2">Localizes on chromosome arms and inner centromeres from prophase through metaphase and then transferring to the spindle midzone and midbody from anaphase through cytokinesis.</text>
</comment>
<comment type="domain">
    <text>The C-terminal region (aa 207-280) represents the dimerization motif.</text>
</comment>
<comment type="PTM">
    <text evidence="2">Phosphorylated by TTK, essentially at Thr-88, Thr94, Thr-169 and Thr-230. Phosphorylation (probably by CDK1) promotes targeting of the CPC to centromeric DNA.</text>
</comment>
<comment type="PTM">
    <text evidence="2">Sumoylated by UBE2I and RANBP2. Desumoylated by SENP3 through the removal of SUMO2 and SUMO3.</text>
</comment>
<comment type="similarity">
    <text evidence="4">Belongs to the borealin family.</text>
</comment>
<gene>
    <name type="primary">CDCA8</name>
</gene>
<dbReference type="EMBL" id="CR858559">
    <property type="protein sequence ID" value="CAH90785.1"/>
    <property type="molecule type" value="mRNA"/>
</dbReference>
<dbReference type="RefSeq" id="NP_001127334.1">
    <property type="nucleotide sequence ID" value="NM_001133862.1"/>
</dbReference>
<dbReference type="BMRB" id="Q5RBS5"/>
<dbReference type="SMR" id="Q5RBS5"/>
<dbReference type="FunCoup" id="Q5RBS5">
    <property type="interactions" value="1274"/>
</dbReference>
<dbReference type="STRING" id="9601.ENSPPYP00000001762"/>
<dbReference type="GeneID" id="100174395"/>
<dbReference type="KEGG" id="pon:100174395"/>
<dbReference type="CTD" id="55143"/>
<dbReference type="InParanoid" id="Q5RBS5"/>
<dbReference type="OrthoDB" id="6360905at2759"/>
<dbReference type="Proteomes" id="UP000001595">
    <property type="component" value="Unplaced"/>
</dbReference>
<dbReference type="GO" id="GO:0032133">
    <property type="term" value="C:chromosome passenger complex"/>
    <property type="evidence" value="ECO:0000250"/>
    <property type="project" value="UniProtKB"/>
</dbReference>
<dbReference type="GO" id="GO:0000775">
    <property type="term" value="C:chromosome, centromeric region"/>
    <property type="evidence" value="ECO:0007669"/>
    <property type="project" value="UniProtKB-SubCell"/>
</dbReference>
<dbReference type="GO" id="GO:0005737">
    <property type="term" value="C:cytoplasm"/>
    <property type="evidence" value="ECO:0007669"/>
    <property type="project" value="UniProtKB-SubCell"/>
</dbReference>
<dbReference type="GO" id="GO:0005730">
    <property type="term" value="C:nucleolus"/>
    <property type="evidence" value="ECO:0007669"/>
    <property type="project" value="UniProtKB-SubCell"/>
</dbReference>
<dbReference type="GO" id="GO:0032991">
    <property type="term" value="C:protein-containing complex"/>
    <property type="evidence" value="ECO:0000250"/>
    <property type="project" value="UniProtKB"/>
</dbReference>
<dbReference type="GO" id="GO:0051233">
    <property type="term" value="C:spindle midzone"/>
    <property type="evidence" value="ECO:0007669"/>
    <property type="project" value="TreeGrafter"/>
</dbReference>
<dbReference type="GO" id="GO:0051301">
    <property type="term" value="P:cell division"/>
    <property type="evidence" value="ECO:0007669"/>
    <property type="project" value="UniProtKB-KW"/>
</dbReference>
<dbReference type="GO" id="GO:0000070">
    <property type="term" value="P:mitotic sister chromatid segregation"/>
    <property type="evidence" value="ECO:0007669"/>
    <property type="project" value="TreeGrafter"/>
</dbReference>
<dbReference type="Gene3D" id="6.10.140.560">
    <property type="match status" value="1"/>
</dbReference>
<dbReference type="Gene3D" id="6.10.250.1900">
    <property type="match status" value="1"/>
</dbReference>
<dbReference type="InterPro" id="IPR046466">
    <property type="entry name" value="Borealin_C"/>
</dbReference>
<dbReference type="InterPro" id="IPR018851">
    <property type="entry name" value="Borealin_N"/>
</dbReference>
<dbReference type="InterPro" id="IPR018867">
    <property type="entry name" value="Cell_div_borealin"/>
</dbReference>
<dbReference type="PANTHER" id="PTHR16040">
    <property type="entry name" value="AUSTRALIN, ISOFORM A-RELATED"/>
    <property type="match status" value="1"/>
</dbReference>
<dbReference type="PANTHER" id="PTHR16040:SF6">
    <property type="entry name" value="BOREALIN"/>
    <property type="match status" value="1"/>
</dbReference>
<dbReference type="Pfam" id="PF10512">
    <property type="entry name" value="Borealin"/>
    <property type="match status" value="1"/>
</dbReference>
<dbReference type="Pfam" id="PF10444">
    <property type="entry name" value="Nbl1_Borealin_N"/>
    <property type="match status" value="1"/>
</dbReference>
<sequence>MAPRKGSSRVAKTNSLRRRKLASFLKDFDREVEIRIKQIESDRQNLLKEVDNLYNIEILRLPKALREMNWLDYFALGGNKQALEEAATADLDITEINKLTAEAIQTPLKSAKTRKVIQVDEMIVEEEEEEENERKNLQTARVKRCPPSKKRTQSIQGKGKGKRSSRANTVTPAVGRLEVSMVKPTPGLTPRFDSRVFKTPGLRTPAAGERIYNISGNGSPLADSKEIFLTVPVGGGESLRLLASDLQRHSIAQLDPEALGNIKKLSNRLAQICSSIRTHK</sequence>
<keyword id="KW-0131">Cell cycle</keyword>
<keyword id="KW-0132">Cell division</keyword>
<keyword id="KW-0137">Centromere</keyword>
<keyword id="KW-0158">Chromosome</keyword>
<keyword id="KW-0963">Cytoplasm</keyword>
<keyword id="KW-0206">Cytoskeleton</keyword>
<keyword id="KW-1017">Isopeptide bond</keyword>
<keyword id="KW-0498">Mitosis</keyword>
<keyword id="KW-0539">Nucleus</keyword>
<keyword id="KW-0597">Phosphoprotein</keyword>
<keyword id="KW-1185">Reference proteome</keyword>
<keyword id="KW-0832">Ubl conjugation</keyword>
<name>BOREA_PONAB</name>